<accession>Q95171</accession>
<sequence>MDIKNSPSSLNSPSSYNFGQSILPLEHGPIYIPSSYVESHHEYPAMTFYSPAVMNYSIPSSVTNLEEGPGRQITSPNMLWSTPGHLSPLAVHHQLSHLYAEPQKSPWCEARSLEHTLPVSRETLKRKVSGNHCASPVTGPSSKRDAHFCAVCSDYASGYHYGVWSCEGCKAFFKRSIQGHNDYICPATNQCTIDKNRRKSCQACRLRKCYEVGMVKCGSRRERCGYRLVRRQGNAEEQLHCAGKAKRSGGHVPRVRELLLSALSPEQLVLTLLEAEPPHVLISRPSVPFTEASMMMSLTKLADEELVHMISWAKKIPGFVELSLLDQVRLLESCWLEVLMVGLMWRSIDHPGKLIFAPNLILDRDEGKCVEGILEVFDMLLATTSRFRELKLQHKEYLCVKAMVLLNSQYDPLVTATQDAESSQKLAHLLNAVTDALVWVIAKSGFSSQQQSVRLANLLMLLSHIRHASNKGMEHLLSMKCKNVVPVYDLLLEMMNAHVVRGCKSSITGSECSPAEDSKSTEGSQNPQSP</sequence>
<name>ESR2_CALJA</name>
<dbReference type="EMBL" id="Y09372">
    <property type="protein sequence ID" value="CAA70546.2"/>
    <property type="molecule type" value="mRNA"/>
</dbReference>
<dbReference type="SMR" id="Q95171"/>
<dbReference type="FunCoup" id="Q95171">
    <property type="interactions" value="1893"/>
</dbReference>
<dbReference type="STRING" id="9483.ENSCJAP00000036235"/>
<dbReference type="GlyCosmos" id="Q95171">
    <property type="glycosylation" value="1 site, No reported glycans"/>
</dbReference>
<dbReference type="eggNOG" id="KOG3575">
    <property type="taxonomic scope" value="Eukaryota"/>
</dbReference>
<dbReference type="InParanoid" id="Q95171"/>
<dbReference type="Proteomes" id="UP000008225">
    <property type="component" value="Unplaced"/>
</dbReference>
<dbReference type="GO" id="GO:0005654">
    <property type="term" value="C:nucleoplasm"/>
    <property type="evidence" value="ECO:0007669"/>
    <property type="project" value="UniProtKB-ARBA"/>
</dbReference>
<dbReference type="GO" id="GO:0005634">
    <property type="term" value="C:nucleus"/>
    <property type="evidence" value="ECO:0000250"/>
    <property type="project" value="UniProtKB"/>
</dbReference>
<dbReference type="GO" id="GO:0030284">
    <property type="term" value="F:nuclear estrogen receptor activity"/>
    <property type="evidence" value="ECO:0007669"/>
    <property type="project" value="InterPro"/>
</dbReference>
<dbReference type="GO" id="GO:0043565">
    <property type="term" value="F:sequence-specific DNA binding"/>
    <property type="evidence" value="ECO:0007669"/>
    <property type="project" value="InterPro"/>
</dbReference>
<dbReference type="GO" id="GO:0005496">
    <property type="term" value="F:steroid binding"/>
    <property type="evidence" value="ECO:0000250"/>
    <property type="project" value="UniProtKB"/>
</dbReference>
<dbReference type="GO" id="GO:0008270">
    <property type="term" value="F:zinc ion binding"/>
    <property type="evidence" value="ECO:0007669"/>
    <property type="project" value="UniProtKB-KW"/>
</dbReference>
<dbReference type="GO" id="GO:0071392">
    <property type="term" value="P:cellular response to estradiol stimulus"/>
    <property type="evidence" value="ECO:0007669"/>
    <property type="project" value="InterPro"/>
</dbReference>
<dbReference type="GO" id="GO:0030520">
    <property type="term" value="P:estrogen receptor signaling pathway"/>
    <property type="evidence" value="ECO:0007669"/>
    <property type="project" value="InterPro"/>
</dbReference>
<dbReference type="GO" id="GO:0045893">
    <property type="term" value="P:positive regulation of DNA-templated transcription"/>
    <property type="evidence" value="ECO:0000250"/>
    <property type="project" value="UniProtKB"/>
</dbReference>
<dbReference type="CDD" id="cd07171">
    <property type="entry name" value="NR_DBD_ER"/>
    <property type="match status" value="1"/>
</dbReference>
<dbReference type="CDD" id="cd06949">
    <property type="entry name" value="NR_LBD_ER"/>
    <property type="match status" value="1"/>
</dbReference>
<dbReference type="FunFam" id="1.10.565.10:FF:000010">
    <property type="entry name" value="Estrogen receptor"/>
    <property type="match status" value="1"/>
</dbReference>
<dbReference type="FunFam" id="3.30.50.10:FF:000014">
    <property type="entry name" value="Estrogen receptor beta"/>
    <property type="match status" value="1"/>
</dbReference>
<dbReference type="Gene3D" id="3.30.50.10">
    <property type="entry name" value="Erythroid Transcription Factor GATA-1, subunit A"/>
    <property type="match status" value="1"/>
</dbReference>
<dbReference type="Gene3D" id="1.10.565.10">
    <property type="entry name" value="Retinoid X Receptor"/>
    <property type="match status" value="1"/>
</dbReference>
<dbReference type="InterPro" id="IPR021064">
    <property type="entry name" value="ER-beta-like_N"/>
</dbReference>
<dbReference type="InterPro" id="IPR028355">
    <property type="entry name" value="ER-beta/gamma"/>
</dbReference>
<dbReference type="InterPro" id="IPR024178">
    <property type="entry name" value="Est_rcpt/est-rel_rcp"/>
</dbReference>
<dbReference type="InterPro" id="IPR035500">
    <property type="entry name" value="NHR-like_dom_sf"/>
</dbReference>
<dbReference type="InterPro" id="IPR000536">
    <property type="entry name" value="Nucl_hrmn_rcpt_lig-bd"/>
</dbReference>
<dbReference type="InterPro" id="IPR050200">
    <property type="entry name" value="Nuclear_hormone_rcpt_NR3"/>
</dbReference>
<dbReference type="InterPro" id="IPR001723">
    <property type="entry name" value="Nuclear_hrmn_rcpt"/>
</dbReference>
<dbReference type="InterPro" id="IPR001628">
    <property type="entry name" value="Znf_hrmn_rcpt"/>
</dbReference>
<dbReference type="InterPro" id="IPR013088">
    <property type="entry name" value="Znf_NHR/GATA"/>
</dbReference>
<dbReference type="PANTHER" id="PTHR48092">
    <property type="entry name" value="KNIRPS-RELATED PROTEIN-RELATED"/>
    <property type="match status" value="1"/>
</dbReference>
<dbReference type="Pfam" id="PF12497">
    <property type="entry name" value="ERbeta_N"/>
    <property type="match status" value="1"/>
</dbReference>
<dbReference type="Pfam" id="PF00104">
    <property type="entry name" value="Hormone_recep"/>
    <property type="match status" value="1"/>
</dbReference>
<dbReference type="Pfam" id="PF00105">
    <property type="entry name" value="zf-C4"/>
    <property type="match status" value="1"/>
</dbReference>
<dbReference type="PIRSF" id="PIRSF500102">
    <property type="entry name" value="ER-b"/>
    <property type="match status" value="1"/>
</dbReference>
<dbReference type="PIRSF" id="PIRSF002527">
    <property type="entry name" value="ER-like_NR"/>
    <property type="match status" value="1"/>
</dbReference>
<dbReference type="PRINTS" id="PR00398">
    <property type="entry name" value="STRDHORMONER"/>
</dbReference>
<dbReference type="PRINTS" id="PR00047">
    <property type="entry name" value="STROIDFINGER"/>
</dbReference>
<dbReference type="SMART" id="SM00430">
    <property type="entry name" value="HOLI"/>
    <property type="match status" value="1"/>
</dbReference>
<dbReference type="SMART" id="SM00399">
    <property type="entry name" value="ZnF_C4"/>
    <property type="match status" value="1"/>
</dbReference>
<dbReference type="SUPFAM" id="SSF57716">
    <property type="entry name" value="Glucocorticoid receptor-like (DNA-binding domain)"/>
    <property type="match status" value="1"/>
</dbReference>
<dbReference type="SUPFAM" id="SSF48508">
    <property type="entry name" value="Nuclear receptor ligand-binding domain"/>
    <property type="match status" value="1"/>
</dbReference>
<dbReference type="PROSITE" id="PS51843">
    <property type="entry name" value="NR_LBD"/>
    <property type="match status" value="1"/>
</dbReference>
<dbReference type="PROSITE" id="PS00031">
    <property type="entry name" value="NUCLEAR_REC_DBD_1"/>
    <property type="match status" value="1"/>
</dbReference>
<dbReference type="PROSITE" id="PS51030">
    <property type="entry name" value="NUCLEAR_REC_DBD_2"/>
    <property type="match status" value="1"/>
</dbReference>
<feature type="chain" id="PRO_0000053641" description="Estrogen receptor beta">
    <location>
        <begin position="1"/>
        <end position="530"/>
    </location>
</feature>
<feature type="domain" description="NR LBD" evidence="6">
    <location>
        <begin position="264"/>
        <end position="498"/>
    </location>
</feature>
<feature type="DNA-binding region" description="Nuclear receptor" evidence="5">
    <location>
        <begin position="149"/>
        <end position="214"/>
    </location>
</feature>
<feature type="zinc finger region" description="NR C4-type" evidence="5">
    <location>
        <begin position="149"/>
        <end position="169"/>
    </location>
</feature>
<feature type="zinc finger region" description="NR C4-type" evidence="5">
    <location>
        <begin position="185"/>
        <end position="209"/>
    </location>
</feature>
<feature type="region of interest" description="Modulating">
    <location>
        <begin position="1"/>
        <end position="148"/>
    </location>
</feature>
<feature type="region of interest" description="Disordered" evidence="7">
    <location>
        <begin position="507"/>
        <end position="530"/>
    </location>
</feature>
<feature type="compositionally biased region" description="Polar residues" evidence="7">
    <location>
        <begin position="521"/>
        <end position="530"/>
    </location>
</feature>
<feature type="modified residue" description="Phosphoserine; alternate" evidence="2">
    <location>
        <position position="61"/>
    </location>
</feature>
<feature type="modified residue" description="Phosphoserine; by MAPK" evidence="2">
    <location>
        <position position="87"/>
    </location>
</feature>
<feature type="modified residue" description="Phosphoserine; by MAPK" evidence="2">
    <location>
        <position position="105"/>
    </location>
</feature>
<feature type="glycosylation site" description="O-linked (GlcNAc) serine; alternate" evidence="1">
    <location>
        <position position="61"/>
    </location>
</feature>
<keyword id="KW-0010">Activator</keyword>
<keyword id="KW-0238">DNA-binding</keyword>
<keyword id="KW-0325">Glycoprotein</keyword>
<keyword id="KW-0446">Lipid-binding</keyword>
<keyword id="KW-0479">Metal-binding</keyword>
<keyword id="KW-0539">Nucleus</keyword>
<keyword id="KW-0597">Phosphoprotein</keyword>
<keyword id="KW-0675">Receptor</keyword>
<keyword id="KW-1185">Reference proteome</keyword>
<keyword id="KW-0754">Steroid-binding</keyword>
<keyword id="KW-0804">Transcription</keyword>
<keyword id="KW-0805">Transcription regulation</keyword>
<keyword id="KW-0862">Zinc</keyword>
<keyword id="KW-0863">Zinc-finger</keyword>
<evidence type="ECO:0000250" key="1"/>
<evidence type="ECO:0000250" key="2">
    <source>
        <dbReference type="UniProtKB" id="O08537"/>
    </source>
</evidence>
<evidence type="ECO:0000250" key="3">
    <source>
        <dbReference type="UniProtKB" id="Q62986"/>
    </source>
</evidence>
<evidence type="ECO:0000250" key="4">
    <source>
        <dbReference type="UniProtKB" id="Q92731"/>
    </source>
</evidence>
<evidence type="ECO:0000255" key="5">
    <source>
        <dbReference type="PROSITE-ProRule" id="PRU00407"/>
    </source>
</evidence>
<evidence type="ECO:0000255" key="6">
    <source>
        <dbReference type="PROSITE-ProRule" id="PRU01189"/>
    </source>
</evidence>
<evidence type="ECO:0000256" key="7">
    <source>
        <dbReference type="SAM" id="MobiDB-lite"/>
    </source>
</evidence>
<evidence type="ECO:0000305" key="8"/>
<reference key="1">
    <citation type="submission" date="1999-11" db="EMBL/GenBank/DDBJ databases">
        <authorList>
            <person name="Gaughan J."/>
            <person name="Scobie G."/>
        </authorList>
    </citation>
    <scope>NUCLEOTIDE SEQUENCE [MRNA]</scope>
    <source>
        <tissue>Testis</tissue>
    </source>
</reference>
<proteinExistence type="evidence at transcript level"/>
<gene>
    <name type="primary">ESR2</name>
    <name type="synonym">NR3A2</name>
</gene>
<protein>
    <recommendedName>
        <fullName>Estrogen receptor beta</fullName>
        <shortName>ER-beta</shortName>
    </recommendedName>
    <alternativeName>
        <fullName>Nuclear receptor subfamily 3 group A member 2</fullName>
    </alternativeName>
</protein>
<organism>
    <name type="scientific">Callithrix jacchus</name>
    <name type="common">White-tufted-ear marmoset</name>
    <dbReference type="NCBI Taxonomy" id="9483"/>
    <lineage>
        <taxon>Eukaryota</taxon>
        <taxon>Metazoa</taxon>
        <taxon>Chordata</taxon>
        <taxon>Craniata</taxon>
        <taxon>Vertebrata</taxon>
        <taxon>Euteleostomi</taxon>
        <taxon>Mammalia</taxon>
        <taxon>Eutheria</taxon>
        <taxon>Euarchontoglires</taxon>
        <taxon>Primates</taxon>
        <taxon>Haplorrhini</taxon>
        <taxon>Platyrrhini</taxon>
        <taxon>Cebidae</taxon>
        <taxon>Callitrichinae</taxon>
        <taxon>Callithrix</taxon>
        <taxon>Callithrix</taxon>
    </lineage>
</organism>
<comment type="function">
    <text>Nuclear hormone receptor. Binds estrogens with an affinity similar to that of ESR1/ER-alpha, and activates expression of reporter genes containing estrogen response elements (ERE) in an estrogen-dependent manner.</text>
</comment>
<comment type="subunit">
    <text evidence="2 3 4">Binds DNA as a homodimer. Can form a heterodimer with ESR1. Interacts with NCOA1, NCOA3, NCOA5 and NCOA6 coactivators, leading to a strong increase of transcription of target genes. Interacts with UBE1C and AKAP13. Interacts with DNTTIP2. Interacts with CCDC62 in the presence of estradiol/E2; this interaction seems to enhance the transcription of target genes. Interacts with DNAAF4. Interacts with PRMT2. Interacts with CCAR2 (via N-terminus) in a ligand-independent manner. Interacts with RBM39, in the presence of estradiol (E2). Interacts with STUB1/CHIP (By similarity).</text>
</comment>
<comment type="subcellular location">
    <subcellularLocation>
        <location evidence="4">Nucleus</location>
    </subcellularLocation>
</comment>
<comment type="domain">
    <text>Composed of three domains: a modulating N-terminal domain, a DNA-binding domain and a C-terminal ligand-binding domain.</text>
</comment>
<comment type="PTM">
    <text evidence="1">Phosphorylation at Ser-87 and Ser-105 recruits NCOA1.</text>
</comment>
<comment type="similarity">
    <text evidence="8">Belongs to the nuclear hormone receptor family. NR3 subfamily.</text>
</comment>